<feature type="chain" id="PRO_0000345478" description="Small ribosomal subunit protein bS18A">
    <location>
        <begin position="1"/>
        <end position="84"/>
    </location>
</feature>
<accession>Q0RTD6</accession>
<evidence type="ECO:0000255" key="1">
    <source>
        <dbReference type="HAMAP-Rule" id="MF_00270"/>
    </source>
</evidence>
<evidence type="ECO:0000305" key="2"/>
<proteinExistence type="inferred from homology"/>
<sequence length="84" mass="9704">MPTRRTPKPGQRKKPNILRERGITYVDYKDVALLRQFISDRGKIRARRITGLTPRQHREVTRAIKNAREMALLPYPGPAAARGR</sequence>
<dbReference type="EMBL" id="CT573213">
    <property type="protein sequence ID" value="CAJ59165.1"/>
    <property type="molecule type" value="Genomic_DNA"/>
</dbReference>
<dbReference type="RefSeq" id="WP_011601743.1">
    <property type="nucleotide sequence ID" value="NC_008278.1"/>
</dbReference>
<dbReference type="SMR" id="Q0RTD6"/>
<dbReference type="STRING" id="326424.FRAAL0490"/>
<dbReference type="KEGG" id="fal:FRAAL0490"/>
<dbReference type="eggNOG" id="COG0238">
    <property type="taxonomic scope" value="Bacteria"/>
</dbReference>
<dbReference type="HOGENOM" id="CLU_148710_1_0_11"/>
<dbReference type="OrthoDB" id="9812008at2"/>
<dbReference type="Proteomes" id="UP000000657">
    <property type="component" value="Chromosome"/>
</dbReference>
<dbReference type="GO" id="GO:0022627">
    <property type="term" value="C:cytosolic small ribosomal subunit"/>
    <property type="evidence" value="ECO:0007669"/>
    <property type="project" value="TreeGrafter"/>
</dbReference>
<dbReference type="GO" id="GO:0070181">
    <property type="term" value="F:small ribosomal subunit rRNA binding"/>
    <property type="evidence" value="ECO:0007669"/>
    <property type="project" value="TreeGrafter"/>
</dbReference>
<dbReference type="GO" id="GO:0003735">
    <property type="term" value="F:structural constituent of ribosome"/>
    <property type="evidence" value="ECO:0007669"/>
    <property type="project" value="InterPro"/>
</dbReference>
<dbReference type="GO" id="GO:0006412">
    <property type="term" value="P:translation"/>
    <property type="evidence" value="ECO:0007669"/>
    <property type="project" value="UniProtKB-UniRule"/>
</dbReference>
<dbReference type="Gene3D" id="4.10.640.10">
    <property type="entry name" value="Ribosomal protein S18"/>
    <property type="match status" value="1"/>
</dbReference>
<dbReference type="HAMAP" id="MF_00270">
    <property type="entry name" value="Ribosomal_bS18"/>
    <property type="match status" value="1"/>
</dbReference>
<dbReference type="InterPro" id="IPR001648">
    <property type="entry name" value="Ribosomal_bS18"/>
</dbReference>
<dbReference type="InterPro" id="IPR018275">
    <property type="entry name" value="Ribosomal_bS18_CS"/>
</dbReference>
<dbReference type="InterPro" id="IPR036870">
    <property type="entry name" value="Ribosomal_bS18_sf"/>
</dbReference>
<dbReference type="NCBIfam" id="TIGR00165">
    <property type="entry name" value="S18"/>
    <property type="match status" value="1"/>
</dbReference>
<dbReference type="PANTHER" id="PTHR13479">
    <property type="entry name" value="30S RIBOSOMAL PROTEIN S18"/>
    <property type="match status" value="1"/>
</dbReference>
<dbReference type="PANTHER" id="PTHR13479:SF40">
    <property type="entry name" value="SMALL RIBOSOMAL SUBUNIT PROTEIN BS18M"/>
    <property type="match status" value="1"/>
</dbReference>
<dbReference type="Pfam" id="PF01084">
    <property type="entry name" value="Ribosomal_S18"/>
    <property type="match status" value="1"/>
</dbReference>
<dbReference type="PRINTS" id="PR00974">
    <property type="entry name" value="RIBOSOMALS18"/>
</dbReference>
<dbReference type="SUPFAM" id="SSF46911">
    <property type="entry name" value="Ribosomal protein S18"/>
    <property type="match status" value="1"/>
</dbReference>
<dbReference type="PROSITE" id="PS00057">
    <property type="entry name" value="RIBOSOMAL_S18"/>
    <property type="match status" value="1"/>
</dbReference>
<gene>
    <name evidence="1" type="primary">rpsR1</name>
    <name type="ordered locus">FRAAL0490</name>
</gene>
<reference key="1">
    <citation type="journal article" date="2007" name="Genome Res.">
        <title>Genome characteristics of facultatively symbiotic Frankia sp. strains reflect host range and host plant biogeography.</title>
        <authorList>
            <person name="Normand P."/>
            <person name="Lapierre P."/>
            <person name="Tisa L.S."/>
            <person name="Gogarten J.P."/>
            <person name="Alloisio N."/>
            <person name="Bagnarol E."/>
            <person name="Bassi C.A."/>
            <person name="Berry A.M."/>
            <person name="Bickhart D.M."/>
            <person name="Choisne N."/>
            <person name="Couloux A."/>
            <person name="Cournoyer B."/>
            <person name="Cruveiller S."/>
            <person name="Daubin V."/>
            <person name="Demange N."/>
            <person name="Francino M.P."/>
            <person name="Goltsman E."/>
            <person name="Huang Y."/>
            <person name="Kopp O.R."/>
            <person name="Labarre L."/>
            <person name="Lapidus A."/>
            <person name="Lavire C."/>
            <person name="Marechal J."/>
            <person name="Martinez M."/>
            <person name="Mastronunzio J.E."/>
            <person name="Mullin B.C."/>
            <person name="Niemann J."/>
            <person name="Pujic P."/>
            <person name="Rawnsley T."/>
            <person name="Rouy Z."/>
            <person name="Schenowitz C."/>
            <person name="Sellstedt A."/>
            <person name="Tavares F."/>
            <person name="Tomkins J.P."/>
            <person name="Vallenet D."/>
            <person name="Valverde C."/>
            <person name="Wall L.G."/>
            <person name="Wang Y."/>
            <person name="Medigue C."/>
            <person name="Benson D.R."/>
        </authorList>
    </citation>
    <scope>NUCLEOTIDE SEQUENCE [LARGE SCALE GENOMIC DNA]</scope>
    <source>
        <strain>DSM 45986 / CECT 9034 / ACN14a</strain>
    </source>
</reference>
<name>RS181_FRAAA</name>
<comment type="function">
    <text evidence="1">Binds as a heterodimer with protein bS6 to the central domain of the 16S rRNA, where it helps stabilize the platform of the 30S subunit.</text>
</comment>
<comment type="subunit">
    <text evidence="1">Part of the 30S ribosomal subunit. Forms a tight heterodimer with protein bS6.</text>
</comment>
<comment type="similarity">
    <text evidence="1">Belongs to the bacterial ribosomal protein bS18 family.</text>
</comment>
<protein>
    <recommendedName>
        <fullName evidence="1">Small ribosomal subunit protein bS18A</fullName>
    </recommendedName>
    <alternativeName>
        <fullName evidence="2">30S ribosomal protein S18 1</fullName>
    </alternativeName>
</protein>
<organism>
    <name type="scientific">Frankia alni (strain DSM 45986 / CECT 9034 / ACN14a)</name>
    <dbReference type="NCBI Taxonomy" id="326424"/>
    <lineage>
        <taxon>Bacteria</taxon>
        <taxon>Bacillati</taxon>
        <taxon>Actinomycetota</taxon>
        <taxon>Actinomycetes</taxon>
        <taxon>Frankiales</taxon>
        <taxon>Frankiaceae</taxon>
        <taxon>Frankia</taxon>
    </lineage>
</organism>
<keyword id="KW-1185">Reference proteome</keyword>
<keyword id="KW-0687">Ribonucleoprotein</keyword>
<keyword id="KW-0689">Ribosomal protein</keyword>
<keyword id="KW-0694">RNA-binding</keyword>
<keyword id="KW-0699">rRNA-binding</keyword>